<organism>
    <name type="scientific">Rhodospirillum rubrum (strain ATCC 11170 / ATH 1.1.1 / DSM 467 / LMG 4362 / NCIMB 8255 / S1)</name>
    <dbReference type="NCBI Taxonomy" id="269796"/>
    <lineage>
        <taxon>Bacteria</taxon>
        <taxon>Pseudomonadati</taxon>
        <taxon>Pseudomonadota</taxon>
        <taxon>Alphaproteobacteria</taxon>
        <taxon>Rhodospirillales</taxon>
        <taxon>Rhodospirillaceae</taxon>
        <taxon>Rhodospirillum</taxon>
    </lineage>
</organism>
<accession>Q2RUU0</accession>
<proteinExistence type="inferred from homology"/>
<reference key="1">
    <citation type="journal article" date="2011" name="Stand. Genomic Sci.">
        <title>Complete genome sequence of Rhodospirillum rubrum type strain (S1).</title>
        <authorList>
            <person name="Munk A.C."/>
            <person name="Copeland A."/>
            <person name="Lucas S."/>
            <person name="Lapidus A."/>
            <person name="Del Rio T.G."/>
            <person name="Barry K."/>
            <person name="Detter J.C."/>
            <person name="Hammon N."/>
            <person name="Israni S."/>
            <person name="Pitluck S."/>
            <person name="Brettin T."/>
            <person name="Bruce D."/>
            <person name="Han C."/>
            <person name="Tapia R."/>
            <person name="Gilna P."/>
            <person name="Schmutz J."/>
            <person name="Larimer F."/>
            <person name="Land M."/>
            <person name="Kyrpides N.C."/>
            <person name="Mavromatis K."/>
            <person name="Richardson P."/>
            <person name="Rohde M."/>
            <person name="Goeker M."/>
            <person name="Klenk H.P."/>
            <person name="Zhang Y."/>
            <person name="Roberts G.P."/>
            <person name="Reslewic S."/>
            <person name="Schwartz D.C."/>
        </authorList>
    </citation>
    <scope>NUCLEOTIDE SEQUENCE [LARGE SCALE GENOMIC DNA]</scope>
    <source>
        <strain>ATCC 11170 / ATH 1.1.1 / DSM 467 / LMG 4362 / NCIMB 8255 / S1</strain>
    </source>
</reference>
<evidence type="ECO:0000255" key="1">
    <source>
        <dbReference type="HAMAP-Rule" id="MF_00577"/>
    </source>
</evidence>
<protein>
    <recommendedName>
        <fullName evidence="1">Urocanate hydratase</fullName>
        <shortName evidence="1">Urocanase</shortName>
        <ecNumber evidence="1">4.2.1.49</ecNumber>
    </recommendedName>
    <alternativeName>
        <fullName evidence="1">Imidazolonepropionate hydrolase</fullName>
    </alternativeName>
</protein>
<dbReference type="EC" id="4.2.1.49" evidence="1"/>
<dbReference type="EMBL" id="CP000230">
    <property type="protein sequence ID" value="ABC22105.1"/>
    <property type="molecule type" value="Genomic_DNA"/>
</dbReference>
<dbReference type="RefSeq" id="WP_011389059.1">
    <property type="nucleotide sequence ID" value="NC_007643.1"/>
</dbReference>
<dbReference type="RefSeq" id="YP_426392.1">
    <property type="nucleotide sequence ID" value="NC_007643.1"/>
</dbReference>
<dbReference type="SMR" id="Q2RUU0"/>
<dbReference type="STRING" id="269796.Rru_A1304"/>
<dbReference type="EnsemblBacteria" id="ABC22105">
    <property type="protein sequence ID" value="ABC22105"/>
    <property type="gene ID" value="Rru_A1304"/>
</dbReference>
<dbReference type="KEGG" id="rru:Rru_A1304"/>
<dbReference type="PATRIC" id="fig|269796.9.peg.1370"/>
<dbReference type="eggNOG" id="COG2987">
    <property type="taxonomic scope" value="Bacteria"/>
</dbReference>
<dbReference type="HOGENOM" id="CLU_018868_0_1_5"/>
<dbReference type="PhylomeDB" id="Q2RUU0"/>
<dbReference type="UniPathway" id="UPA00379">
    <property type="reaction ID" value="UER00550"/>
</dbReference>
<dbReference type="Proteomes" id="UP000001929">
    <property type="component" value="Chromosome"/>
</dbReference>
<dbReference type="GO" id="GO:0005737">
    <property type="term" value="C:cytoplasm"/>
    <property type="evidence" value="ECO:0007669"/>
    <property type="project" value="UniProtKB-SubCell"/>
</dbReference>
<dbReference type="GO" id="GO:0016153">
    <property type="term" value="F:urocanate hydratase activity"/>
    <property type="evidence" value="ECO:0007669"/>
    <property type="project" value="UniProtKB-UniRule"/>
</dbReference>
<dbReference type="GO" id="GO:0019556">
    <property type="term" value="P:L-histidine catabolic process to glutamate and formamide"/>
    <property type="evidence" value="ECO:0007669"/>
    <property type="project" value="UniProtKB-UniPathway"/>
</dbReference>
<dbReference type="GO" id="GO:0019557">
    <property type="term" value="P:L-histidine catabolic process to glutamate and formate"/>
    <property type="evidence" value="ECO:0007669"/>
    <property type="project" value="UniProtKB-UniPathway"/>
</dbReference>
<dbReference type="FunFam" id="3.40.50.10730:FF:000001">
    <property type="entry name" value="Urocanate hydratase"/>
    <property type="match status" value="1"/>
</dbReference>
<dbReference type="Gene3D" id="3.40.50.10730">
    <property type="entry name" value="Urocanase like domains"/>
    <property type="match status" value="1"/>
</dbReference>
<dbReference type="Gene3D" id="3.40.1770.10">
    <property type="entry name" value="Urocanase superfamily"/>
    <property type="match status" value="1"/>
</dbReference>
<dbReference type="HAMAP" id="MF_00577">
    <property type="entry name" value="HutU"/>
    <property type="match status" value="1"/>
</dbReference>
<dbReference type="InterPro" id="IPR055351">
    <property type="entry name" value="Urocanase"/>
</dbReference>
<dbReference type="InterPro" id="IPR023637">
    <property type="entry name" value="Urocanase-like"/>
</dbReference>
<dbReference type="InterPro" id="IPR035401">
    <property type="entry name" value="Urocanase_C"/>
</dbReference>
<dbReference type="InterPro" id="IPR038364">
    <property type="entry name" value="Urocanase_central_sf"/>
</dbReference>
<dbReference type="InterPro" id="IPR023636">
    <property type="entry name" value="Urocanase_CS"/>
</dbReference>
<dbReference type="InterPro" id="IPR035400">
    <property type="entry name" value="Urocanase_N"/>
</dbReference>
<dbReference type="InterPro" id="IPR035085">
    <property type="entry name" value="Urocanase_Rossmann-like"/>
</dbReference>
<dbReference type="InterPro" id="IPR036190">
    <property type="entry name" value="Urocanase_sf"/>
</dbReference>
<dbReference type="NCBIfam" id="TIGR01228">
    <property type="entry name" value="hutU"/>
    <property type="match status" value="1"/>
</dbReference>
<dbReference type="NCBIfam" id="NF003820">
    <property type="entry name" value="PRK05414.1"/>
    <property type="match status" value="1"/>
</dbReference>
<dbReference type="PANTHER" id="PTHR12216">
    <property type="entry name" value="UROCANATE HYDRATASE"/>
    <property type="match status" value="1"/>
</dbReference>
<dbReference type="PANTHER" id="PTHR12216:SF4">
    <property type="entry name" value="UROCANATE HYDRATASE"/>
    <property type="match status" value="1"/>
</dbReference>
<dbReference type="Pfam" id="PF01175">
    <property type="entry name" value="Urocanase"/>
    <property type="match status" value="1"/>
</dbReference>
<dbReference type="Pfam" id="PF17392">
    <property type="entry name" value="Urocanase_C"/>
    <property type="match status" value="1"/>
</dbReference>
<dbReference type="Pfam" id="PF17391">
    <property type="entry name" value="Urocanase_N"/>
    <property type="match status" value="1"/>
</dbReference>
<dbReference type="PIRSF" id="PIRSF001423">
    <property type="entry name" value="Urocanate_hydrat"/>
    <property type="match status" value="1"/>
</dbReference>
<dbReference type="SUPFAM" id="SSF111326">
    <property type="entry name" value="Urocanase"/>
    <property type="match status" value="1"/>
</dbReference>
<dbReference type="PROSITE" id="PS01233">
    <property type="entry name" value="UROCANASE"/>
    <property type="match status" value="1"/>
</dbReference>
<feature type="chain" id="PRO_1000025145" description="Urocanate hydratase">
    <location>
        <begin position="1"/>
        <end position="556"/>
    </location>
</feature>
<feature type="active site" evidence="1">
    <location>
        <position position="411"/>
    </location>
</feature>
<feature type="binding site" evidence="1">
    <location>
        <begin position="52"/>
        <end position="53"/>
    </location>
    <ligand>
        <name>NAD(+)</name>
        <dbReference type="ChEBI" id="CHEBI:57540"/>
    </ligand>
</feature>
<feature type="binding site" evidence="1">
    <location>
        <position position="130"/>
    </location>
    <ligand>
        <name>NAD(+)</name>
        <dbReference type="ChEBI" id="CHEBI:57540"/>
    </ligand>
</feature>
<feature type="binding site" evidence="1">
    <location>
        <begin position="176"/>
        <end position="178"/>
    </location>
    <ligand>
        <name>NAD(+)</name>
        <dbReference type="ChEBI" id="CHEBI:57540"/>
    </ligand>
</feature>
<feature type="binding site" evidence="1">
    <location>
        <position position="196"/>
    </location>
    <ligand>
        <name>NAD(+)</name>
        <dbReference type="ChEBI" id="CHEBI:57540"/>
    </ligand>
</feature>
<feature type="binding site" evidence="1">
    <location>
        <position position="201"/>
    </location>
    <ligand>
        <name>NAD(+)</name>
        <dbReference type="ChEBI" id="CHEBI:57540"/>
    </ligand>
</feature>
<feature type="binding site" evidence="1">
    <location>
        <begin position="243"/>
        <end position="244"/>
    </location>
    <ligand>
        <name>NAD(+)</name>
        <dbReference type="ChEBI" id="CHEBI:57540"/>
    </ligand>
</feature>
<feature type="binding site" evidence="1">
    <location>
        <begin position="264"/>
        <end position="268"/>
    </location>
    <ligand>
        <name>NAD(+)</name>
        <dbReference type="ChEBI" id="CHEBI:57540"/>
    </ligand>
</feature>
<feature type="binding site" evidence="1">
    <location>
        <begin position="274"/>
        <end position="275"/>
    </location>
    <ligand>
        <name>NAD(+)</name>
        <dbReference type="ChEBI" id="CHEBI:57540"/>
    </ligand>
</feature>
<feature type="binding site" evidence="1">
    <location>
        <position position="323"/>
    </location>
    <ligand>
        <name>NAD(+)</name>
        <dbReference type="ChEBI" id="CHEBI:57540"/>
    </ligand>
</feature>
<feature type="binding site" evidence="1">
    <location>
        <position position="493"/>
    </location>
    <ligand>
        <name>NAD(+)</name>
        <dbReference type="ChEBI" id="CHEBI:57540"/>
    </ligand>
</feature>
<sequence>MSDRLDNQRVVRAPRGPEITCKSWLSEAPLRMLMNNLDPEVAEKPEELVVYGGIGRAARNWQCYDQIVAALKRLEDDETLLVQSGKAVGVFKTHRDAPRVLIANSNLVPHWATWETFHALDRAGLMMYGQMTAGSWIYIGSQGIVQGTYETFVEAGRRHYGGSLAGRWILTGGLGGMGGAQPLAATMAGASMLAVECQPSRIEARLRTGYLDRQTADLDQALAWIAEAGAPGAKPVSVGLLGNAAEVFPELVKRGVRPDLVTDQTSAHDPLNGYLPAGWSLERWERGRERAPAEVIAAAKASMATQVRAMLAFHAQGIPTVDYGNNIRQRALEEGVSDAFAFPGFVPAYIRPLFCRGIGPFRWAALSGDPEDIYRTDAKVKELIPDDPHLHTWLDMARERIHFQGLPSRICWVGLGDRHRLGLAFNAMVASGELKAPVVIGRDHLDSGSVASPNRETEAMRDGSDAVSDWPLLNALLNTAGGATWVSLHHGGGVGMGFSQHAGMVIVCDGSEDAARRIGRVLWNDPATGVMRHADAGYDDAIACAREKGLDLPFLG</sequence>
<gene>
    <name evidence="1" type="primary">hutU</name>
    <name type="ordered locus">Rru_A1304</name>
</gene>
<comment type="function">
    <text evidence="1">Catalyzes the conversion of urocanate to 4-imidazolone-5-propionate.</text>
</comment>
<comment type="catalytic activity">
    <reaction evidence="1">
        <text>4-imidazolone-5-propanoate = trans-urocanate + H2O</text>
        <dbReference type="Rhea" id="RHEA:13101"/>
        <dbReference type="ChEBI" id="CHEBI:15377"/>
        <dbReference type="ChEBI" id="CHEBI:17771"/>
        <dbReference type="ChEBI" id="CHEBI:77893"/>
        <dbReference type="EC" id="4.2.1.49"/>
    </reaction>
</comment>
<comment type="cofactor">
    <cofactor evidence="1">
        <name>NAD(+)</name>
        <dbReference type="ChEBI" id="CHEBI:57540"/>
    </cofactor>
    <text evidence="1">Binds 1 NAD(+) per subunit.</text>
</comment>
<comment type="pathway">
    <text evidence="1">Amino-acid degradation; L-histidine degradation into L-glutamate; N-formimidoyl-L-glutamate from L-histidine: step 2/3.</text>
</comment>
<comment type="subcellular location">
    <subcellularLocation>
        <location evidence="1">Cytoplasm</location>
    </subcellularLocation>
</comment>
<comment type="similarity">
    <text evidence="1">Belongs to the urocanase family.</text>
</comment>
<keyword id="KW-0963">Cytoplasm</keyword>
<keyword id="KW-0369">Histidine metabolism</keyword>
<keyword id="KW-0456">Lyase</keyword>
<keyword id="KW-0520">NAD</keyword>
<keyword id="KW-1185">Reference proteome</keyword>
<name>HUTU_RHORT</name>